<feature type="chain" id="PRO_1000130559" description="L-threonine 3-dehydrogenase">
    <location>
        <begin position="1"/>
        <end position="341"/>
    </location>
</feature>
<feature type="active site" description="Charge relay system" evidence="1">
    <location>
        <position position="40"/>
    </location>
</feature>
<feature type="active site" description="Charge relay system" evidence="1">
    <location>
        <position position="43"/>
    </location>
</feature>
<feature type="binding site" evidence="1">
    <location>
        <position position="38"/>
    </location>
    <ligand>
        <name>Zn(2+)</name>
        <dbReference type="ChEBI" id="CHEBI:29105"/>
        <label>1</label>
        <note>catalytic</note>
    </ligand>
</feature>
<feature type="binding site" evidence="1">
    <location>
        <position position="63"/>
    </location>
    <ligand>
        <name>Zn(2+)</name>
        <dbReference type="ChEBI" id="CHEBI:29105"/>
        <label>1</label>
        <note>catalytic</note>
    </ligand>
</feature>
<feature type="binding site" evidence="1">
    <location>
        <position position="64"/>
    </location>
    <ligand>
        <name>Zn(2+)</name>
        <dbReference type="ChEBI" id="CHEBI:29105"/>
        <label>1</label>
        <note>catalytic</note>
    </ligand>
</feature>
<feature type="binding site" evidence="1">
    <location>
        <position position="93"/>
    </location>
    <ligand>
        <name>Zn(2+)</name>
        <dbReference type="ChEBI" id="CHEBI:29105"/>
        <label>2</label>
    </ligand>
</feature>
<feature type="binding site" evidence="1">
    <location>
        <position position="96"/>
    </location>
    <ligand>
        <name>Zn(2+)</name>
        <dbReference type="ChEBI" id="CHEBI:29105"/>
        <label>2</label>
    </ligand>
</feature>
<feature type="binding site" evidence="1">
    <location>
        <position position="99"/>
    </location>
    <ligand>
        <name>Zn(2+)</name>
        <dbReference type="ChEBI" id="CHEBI:29105"/>
        <label>2</label>
    </ligand>
</feature>
<feature type="binding site" evidence="1">
    <location>
        <position position="107"/>
    </location>
    <ligand>
        <name>Zn(2+)</name>
        <dbReference type="ChEBI" id="CHEBI:29105"/>
        <label>2</label>
    </ligand>
</feature>
<feature type="binding site" evidence="1">
    <location>
        <position position="175"/>
    </location>
    <ligand>
        <name>NAD(+)</name>
        <dbReference type="ChEBI" id="CHEBI:57540"/>
    </ligand>
</feature>
<feature type="binding site" evidence="1">
    <location>
        <position position="195"/>
    </location>
    <ligand>
        <name>NAD(+)</name>
        <dbReference type="ChEBI" id="CHEBI:57540"/>
    </ligand>
</feature>
<feature type="binding site" evidence="1">
    <location>
        <position position="200"/>
    </location>
    <ligand>
        <name>NAD(+)</name>
        <dbReference type="ChEBI" id="CHEBI:57540"/>
    </ligand>
</feature>
<feature type="binding site" evidence="1">
    <location>
        <begin position="262"/>
        <end position="264"/>
    </location>
    <ligand>
        <name>NAD(+)</name>
        <dbReference type="ChEBI" id="CHEBI:57540"/>
    </ligand>
</feature>
<feature type="binding site" evidence="1">
    <location>
        <begin position="286"/>
        <end position="287"/>
    </location>
    <ligand>
        <name>NAD(+)</name>
        <dbReference type="ChEBI" id="CHEBI:57540"/>
    </ligand>
</feature>
<feature type="site" description="Important for catalytic activity for the proton relay mechanism but does not participate directly in the coordination of zinc atom" evidence="1">
    <location>
        <position position="148"/>
    </location>
</feature>
<reference key="1">
    <citation type="journal article" date="2011" name="J. Bacteriol.">
        <title>Comparative genomics of 28 Salmonella enterica isolates: evidence for CRISPR-mediated adaptive sublineage evolution.</title>
        <authorList>
            <person name="Fricke W.F."/>
            <person name="Mammel M.K."/>
            <person name="McDermott P.F."/>
            <person name="Tartera C."/>
            <person name="White D.G."/>
            <person name="Leclerc J.E."/>
            <person name="Ravel J."/>
            <person name="Cebula T.A."/>
        </authorList>
    </citation>
    <scope>NUCLEOTIDE SEQUENCE [LARGE SCALE GENOMIC DNA]</scope>
    <source>
        <strain>CT_02021853</strain>
    </source>
</reference>
<evidence type="ECO:0000255" key="1">
    <source>
        <dbReference type="HAMAP-Rule" id="MF_00627"/>
    </source>
</evidence>
<gene>
    <name evidence="1" type="primary">tdh</name>
    <name type="ordered locus">SeD_A4094</name>
</gene>
<comment type="function">
    <text evidence="1">Catalyzes the NAD(+)-dependent oxidation of L-threonine to 2-amino-3-ketobutyrate.</text>
</comment>
<comment type="catalytic activity">
    <reaction evidence="1">
        <text>L-threonine + NAD(+) = (2S)-2-amino-3-oxobutanoate + NADH + H(+)</text>
        <dbReference type="Rhea" id="RHEA:13161"/>
        <dbReference type="ChEBI" id="CHEBI:15378"/>
        <dbReference type="ChEBI" id="CHEBI:57540"/>
        <dbReference type="ChEBI" id="CHEBI:57926"/>
        <dbReference type="ChEBI" id="CHEBI:57945"/>
        <dbReference type="ChEBI" id="CHEBI:78948"/>
        <dbReference type="EC" id="1.1.1.103"/>
    </reaction>
</comment>
<comment type="cofactor">
    <cofactor evidence="1">
        <name>Zn(2+)</name>
        <dbReference type="ChEBI" id="CHEBI:29105"/>
    </cofactor>
    <text evidence="1">Binds 2 Zn(2+) ions per subunit.</text>
</comment>
<comment type="pathway">
    <text evidence="1">Amino-acid degradation; L-threonine degradation via oxydo-reductase pathway; glycine from L-threonine: step 1/2.</text>
</comment>
<comment type="subunit">
    <text evidence="1">Homotetramer.</text>
</comment>
<comment type="subcellular location">
    <subcellularLocation>
        <location evidence="1">Cytoplasm</location>
    </subcellularLocation>
</comment>
<comment type="similarity">
    <text evidence="1">Belongs to the zinc-containing alcohol dehydrogenase family.</text>
</comment>
<dbReference type="EC" id="1.1.1.103" evidence="1"/>
<dbReference type="EMBL" id="CP001144">
    <property type="protein sequence ID" value="ACH77021.1"/>
    <property type="molecule type" value="Genomic_DNA"/>
</dbReference>
<dbReference type="RefSeq" id="WP_000645990.1">
    <property type="nucleotide sequence ID" value="NC_011205.1"/>
</dbReference>
<dbReference type="SMR" id="B5FLI6"/>
<dbReference type="KEGG" id="sed:SeD_A4094"/>
<dbReference type="HOGENOM" id="CLU_026673_11_0_6"/>
<dbReference type="UniPathway" id="UPA00046">
    <property type="reaction ID" value="UER00505"/>
</dbReference>
<dbReference type="Proteomes" id="UP000008322">
    <property type="component" value="Chromosome"/>
</dbReference>
<dbReference type="GO" id="GO:0005737">
    <property type="term" value="C:cytoplasm"/>
    <property type="evidence" value="ECO:0007669"/>
    <property type="project" value="UniProtKB-SubCell"/>
</dbReference>
<dbReference type="GO" id="GO:0008743">
    <property type="term" value="F:L-threonine 3-dehydrogenase activity"/>
    <property type="evidence" value="ECO:0007669"/>
    <property type="project" value="UniProtKB-UniRule"/>
</dbReference>
<dbReference type="GO" id="GO:0008270">
    <property type="term" value="F:zinc ion binding"/>
    <property type="evidence" value="ECO:0007669"/>
    <property type="project" value="UniProtKB-UniRule"/>
</dbReference>
<dbReference type="GO" id="GO:0019518">
    <property type="term" value="P:L-threonine catabolic process to glycine"/>
    <property type="evidence" value="ECO:0007669"/>
    <property type="project" value="UniProtKB-UniPathway"/>
</dbReference>
<dbReference type="FunFam" id="3.40.50.720:FF:000059">
    <property type="entry name" value="L-threonine 3-dehydrogenase"/>
    <property type="match status" value="1"/>
</dbReference>
<dbReference type="Gene3D" id="3.90.180.10">
    <property type="entry name" value="Medium-chain alcohol dehydrogenases, catalytic domain"/>
    <property type="match status" value="1"/>
</dbReference>
<dbReference type="Gene3D" id="3.40.50.720">
    <property type="entry name" value="NAD(P)-binding Rossmann-like Domain"/>
    <property type="match status" value="1"/>
</dbReference>
<dbReference type="HAMAP" id="MF_00627">
    <property type="entry name" value="Thr_dehydrog"/>
    <property type="match status" value="1"/>
</dbReference>
<dbReference type="InterPro" id="IPR013149">
    <property type="entry name" value="ADH-like_C"/>
</dbReference>
<dbReference type="InterPro" id="IPR013154">
    <property type="entry name" value="ADH-like_N"/>
</dbReference>
<dbReference type="InterPro" id="IPR002328">
    <property type="entry name" value="ADH_Zn_CS"/>
</dbReference>
<dbReference type="InterPro" id="IPR011032">
    <property type="entry name" value="GroES-like_sf"/>
</dbReference>
<dbReference type="InterPro" id="IPR004627">
    <property type="entry name" value="L-Threonine_3-DHase"/>
</dbReference>
<dbReference type="InterPro" id="IPR036291">
    <property type="entry name" value="NAD(P)-bd_dom_sf"/>
</dbReference>
<dbReference type="InterPro" id="IPR020843">
    <property type="entry name" value="PKS_ER"/>
</dbReference>
<dbReference type="InterPro" id="IPR050129">
    <property type="entry name" value="Zn_alcohol_dh"/>
</dbReference>
<dbReference type="NCBIfam" id="NF003808">
    <property type="entry name" value="PRK05396.1"/>
    <property type="match status" value="1"/>
</dbReference>
<dbReference type="NCBIfam" id="TIGR00692">
    <property type="entry name" value="tdh"/>
    <property type="match status" value="1"/>
</dbReference>
<dbReference type="PANTHER" id="PTHR43401">
    <property type="entry name" value="L-THREONINE 3-DEHYDROGENASE"/>
    <property type="match status" value="1"/>
</dbReference>
<dbReference type="PANTHER" id="PTHR43401:SF2">
    <property type="entry name" value="L-THREONINE 3-DEHYDROGENASE"/>
    <property type="match status" value="1"/>
</dbReference>
<dbReference type="Pfam" id="PF08240">
    <property type="entry name" value="ADH_N"/>
    <property type="match status" value="1"/>
</dbReference>
<dbReference type="Pfam" id="PF00107">
    <property type="entry name" value="ADH_zinc_N"/>
    <property type="match status" value="1"/>
</dbReference>
<dbReference type="SMART" id="SM00829">
    <property type="entry name" value="PKS_ER"/>
    <property type="match status" value="1"/>
</dbReference>
<dbReference type="SUPFAM" id="SSF50129">
    <property type="entry name" value="GroES-like"/>
    <property type="match status" value="1"/>
</dbReference>
<dbReference type="SUPFAM" id="SSF51735">
    <property type="entry name" value="NAD(P)-binding Rossmann-fold domains"/>
    <property type="match status" value="1"/>
</dbReference>
<dbReference type="PROSITE" id="PS00059">
    <property type="entry name" value="ADH_ZINC"/>
    <property type="match status" value="1"/>
</dbReference>
<sequence length="341" mass="37213">MKALSKLKAEEGIWMTDVPEPEVGHNDLLIKIRKTAICGTDVHIYNWDDWSQKTIPVPMVVGHEYVGEVVGIGQEVKGFKIGDRVSGEGHITCGHCRNCRGGRTHLCRNTTGVGVNRPGCFAEYLVIPAFNAFKIPDNISDDLASIFDPFGNAVHTALSFDLVGEDVLVSGAGPIGVMAAAVAKHVGARHVVITDVNEYRLELARKMGVTRAVNVAKESLNDVMAELGMTEGFDVGLEMSGAPPAFRTMLDTMNHGGRIAMLGIPPSDMSIDWTKVIFKGLFIKGIYGREMFETWYKMAALIQSGLDLSPIITHRFSIDDFQKGFDAMRSGQSGKVILSWD</sequence>
<accession>B5FLI6</accession>
<keyword id="KW-0963">Cytoplasm</keyword>
<keyword id="KW-0479">Metal-binding</keyword>
<keyword id="KW-0520">NAD</keyword>
<keyword id="KW-0560">Oxidoreductase</keyword>
<keyword id="KW-0862">Zinc</keyword>
<protein>
    <recommendedName>
        <fullName evidence="1">L-threonine 3-dehydrogenase</fullName>
        <shortName evidence="1">TDH</shortName>
        <ecNumber evidence="1">1.1.1.103</ecNumber>
    </recommendedName>
</protein>
<organism>
    <name type="scientific">Salmonella dublin (strain CT_02021853)</name>
    <dbReference type="NCBI Taxonomy" id="439851"/>
    <lineage>
        <taxon>Bacteria</taxon>
        <taxon>Pseudomonadati</taxon>
        <taxon>Pseudomonadota</taxon>
        <taxon>Gammaproteobacteria</taxon>
        <taxon>Enterobacterales</taxon>
        <taxon>Enterobacteriaceae</taxon>
        <taxon>Salmonella</taxon>
    </lineage>
</organism>
<name>TDH_SALDC</name>
<proteinExistence type="inferred from homology"/>